<dbReference type="EMBL" id="Z48569">
    <property type="protein sequence ID" value="CAA88457.1"/>
    <property type="molecule type" value="Genomic_DNA"/>
</dbReference>
<dbReference type="EMBL" id="AF158101">
    <property type="protein sequence ID" value="AAD42542.1"/>
    <property type="molecule type" value="Genomic_DNA"/>
</dbReference>
<dbReference type="PIR" id="JV0105">
    <property type="entry name" value="JV0105"/>
</dbReference>
<dbReference type="RefSeq" id="NP_049870.1">
    <property type="nucleotide sequence ID" value="NC_000866.4"/>
</dbReference>
<dbReference type="SMR" id="P22919"/>
<dbReference type="GeneID" id="1258792"/>
<dbReference type="KEGG" id="vg:1258792"/>
<dbReference type="OrthoDB" id="18893at10239"/>
<dbReference type="Proteomes" id="UP000009087">
    <property type="component" value="Segment"/>
</dbReference>
<protein>
    <recommendedName>
        <fullName>Uncharacterized 11.4 kDa protein in arn-motA intergenic region</fullName>
    </recommendedName>
</protein>
<name>Y16C_BPT4</name>
<organism>
    <name type="scientific">Enterobacteria phage T4</name>
    <name type="common">Bacteriophage T4</name>
    <dbReference type="NCBI Taxonomy" id="10665"/>
    <lineage>
        <taxon>Viruses</taxon>
        <taxon>Duplodnaviria</taxon>
        <taxon>Heunggongvirae</taxon>
        <taxon>Uroviricota</taxon>
        <taxon>Caudoviricetes</taxon>
        <taxon>Straboviridae</taxon>
        <taxon>Tevenvirinae</taxon>
        <taxon>Tequatrovirus</taxon>
    </lineage>
</organism>
<sequence length="98" mass="11365">MNIKKFQIDGIMNQIQALEYANKMMSTNWGIYTNEPGFQFCDMEFTKKLVGKDYVCPFSSPVNGMLKPALRDLYIAMNEEMIKELKRQLKVIQFGQGN</sequence>
<accession>P22919</accession>
<accession>Q9T0S9</accession>
<reference key="1">
    <citation type="journal article" date="1990" name="Mol. Microbiol.">
        <title>Nucleotide sequence and control of transcription of the bacteriophage T4 motA regulatory gene.</title>
        <authorList>
            <person name="Uzan M."/>
            <person name="Brody E."/>
            <person name="Favre R."/>
        </authorList>
    </citation>
    <scope>NUCLEOTIDE SEQUENCE [GENOMIC DNA]</scope>
</reference>
<reference key="2">
    <citation type="journal article" date="2003" name="Microbiol. Mol. Biol. Rev.">
        <title>Bacteriophage T4 genome.</title>
        <authorList>
            <person name="Miller E.S."/>
            <person name="Kutter E."/>
            <person name="Mosig G."/>
            <person name="Arisaka F."/>
            <person name="Kunisawa T."/>
            <person name="Ruger W."/>
        </authorList>
    </citation>
    <scope>NUCLEOTIDE SEQUENCE [LARGE SCALE GENOMIC DNA]</scope>
</reference>
<gene>
    <name type="primary">y16C</name>
    <name type="synonym">arn.2</name>
    <name type="synonym">asiA.3</name>
    <name type="synonym">motA.-4</name>
</gene>
<keyword id="KW-1185">Reference proteome</keyword>
<proteinExistence type="predicted"/>
<evidence type="ECO:0000305" key="1"/>
<feature type="chain" id="PRO_0000165202" description="Uncharacterized 11.4 kDa protein in arn-motA intergenic region">
    <location>
        <begin position="1"/>
        <end position="98"/>
    </location>
</feature>
<feature type="sequence conflict" description="In Ref. 1; CAA88457." evidence="1" ref="1">
    <original>MIKELKRQLKVIQFGQGN</original>
    <variation>DDKRVKTSTEGDSIWPGKLIQNLIILIL</variation>
    <location>
        <begin position="81"/>
        <end position="98"/>
    </location>
</feature>
<organismHost>
    <name type="scientific">Escherichia coli</name>
    <dbReference type="NCBI Taxonomy" id="562"/>
</organismHost>